<proteinExistence type="evidence at transcript level"/>
<gene>
    <name type="primary">XBOS33</name>
    <name type="ordered locus">Os10g0521600</name>
    <name type="ordered locus">LOC_Os10g37730</name>
    <name type="ORF">OSJNBb0018B10.26</name>
    <name type="ORF">OSJNBb0028C01.29</name>
</gene>
<sequence length="520" mass="55562">MGNSLGCSASGERLVSAARDGDAVEARMLLELSPALARYSTFGGLNSPLHFAAAKGHLDIVTLLLEKGADVNVRNYCGQTALMHACRHGHWEVVQMLLLFRCNVTRADYLSGRTALHFAAHDGLVRCVRLLLADFVPSAPLEDGASSTVDGGECQTNSGSSPCSSLGLKFNESARLRYINKPADGGVTALHMAALNGHFDCMQLLIDLGANVSAVTFPYGTTANLIGAGSTPLHYAAGGGNAECCQLLLSKGASKLTLNCNGWLPIDVARMFGRRFLEPLLSPNSNSSIPAYQPSNYLALPFMSILNIAREFGLLHTVASVDDSDLCAVCLERSCSVAAEGCCHEFCIKCALYLCSTSNTRVEFTGPPGSIPCPLCRNGIMSFTKLPSTPTEGLKSSSALTFCNPCMLNTRSVDSPATISKAEIRRNRVAAVSSELVCPLTCSPFPSSALPTCRCSDDDPCDAIETQDGSEVQSPQPSHCASMEMDKREQQDLDRTSCSGMFWSRRSCHREEQCNAEINA</sequence>
<dbReference type="EC" id="2.3.2.27"/>
<dbReference type="EMBL" id="AC051634">
    <property type="protein sequence ID" value="AAG13435.1"/>
    <property type="status" value="ALT_SEQ"/>
    <property type="molecule type" value="Genomic_DNA"/>
</dbReference>
<dbReference type="EMBL" id="AC079029">
    <property type="protein sequence ID" value="AAM92304.1"/>
    <property type="status" value="ALT_SEQ"/>
    <property type="molecule type" value="Genomic_DNA"/>
</dbReference>
<dbReference type="EMBL" id="DP000086">
    <property type="protein sequence ID" value="ABB47902.2"/>
    <property type="molecule type" value="Genomic_DNA"/>
</dbReference>
<dbReference type="EMBL" id="DP000086">
    <property type="protein sequence ID" value="ABG66195.1"/>
    <property type="molecule type" value="Genomic_DNA"/>
</dbReference>
<dbReference type="EMBL" id="DP000086">
    <property type="protein sequence ID" value="ABG66196.1"/>
    <property type="status" value="ALT_SEQ"/>
    <property type="molecule type" value="Genomic_DNA"/>
</dbReference>
<dbReference type="EMBL" id="AP008216">
    <property type="protein sequence ID" value="BAH94971.1"/>
    <property type="status" value="ALT_SEQ"/>
    <property type="molecule type" value="Genomic_DNA"/>
</dbReference>
<dbReference type="EMBL" id="AP014966">
    <property type="status" value="NOT_ANNOTATED_CDS"/>
    <property type="molecule type" value="Genomic_DNA"/>
</dbReference>
<dbReference type="EMBL" id="AK063580">
    <property type="status" value="NOT_ANNOTATED_CDS"/>
    <property type="molecule type" value="mRNA"/>
</dbReference>
<dbReference type="EMBL" id="AK065223">
    <property type="protein sequence ID" value="BAG89425.1"/>
    <property type="molecule type" value="mRNA"/>
</dbReference>
<dbReference type="RefSeq" id="XP_015614443.1">
    <property type="nucleotide sequence ID" value="XM_015758957.1"/>
</dbReference>
<dbReference type="SMR" id="Q337A0"/>
<dbReference type="FunCoup" id="Q337A0">
    <property type="interactions" value="1377"/>
</dbReference>
<dbReference type="STRING" id="39947.Q337A0"/>
<dbReference type="PaxDb" id="39947-Q337A0"/>
<dbReference type="KEGG" id="dosa:Os10g0521600"/>
<dbReference type="eggNOG" id="ENOG502QR1Y">
    <property type="taxonomic scope" value="Eukaryota"/>
</dbReference>
<dbReference type="HOGENOM" id="CLU_081178_0_0_1"/>
<dbReference type="InParanoid" id="Q337A0"/>
<dbReference type="OrthoDB" id="20872at2759"/>
<dbReference type="UniPathway" id="UPA00143"/>
<dbReference type="Proteomes" id="UP000000763">
    <property type="component" value="Chromosome 10"/>
</dbReference>
<dbReference type="Proteomes" id="UP000059680">
    <property type="component" value="Chromosome 10"/>
</dbReference>
<dbReference type="GO" id="GO:0016740">
    <property type="term" value="F:transferase activity"/>
    <property type="evidence" value="ECO:0007669"/>
    <property type="project" value="UniProtKB-KW"/>
</dbReference>
<dbReference type="GO" id="GO:0008270">
    <property type="term" value="F:zinc ion binding"/>
    <property type="evidence" value="ECO:0007669"/>
    <property type="project" value="UniProtKB-KW"/>
</dbReference>
<dbReference type="GO" id="GO:0016567">
    <property type="term" value="P:protein ubiquitination"/>
    <property type="evidence" value="ECO:0007669"/>
    <property type="project" value="UniProtKB-UniPathway"/>
</dbReference>
<dbReference type="FunFam" id="1.25.40.20:FF:000262">
    <property type="entry name" value="E3 ubiquitin-protein ligase XBAT33"/>
    <property type="match status" value="1"/>
</dbReference>
<dbReference type="FunFam" id="3.30.40.10:FF:000528">
    <property type="entry name" value="E3 ubiquitin-protein ligase XBAT33"/>
    <property type="match status" value="1"/>
</dbReference>
<dbReference type="Gene3D" id="1.25.40.20">
    <property type="entry name" value="Ankyrin repeat-containing domain"/>
    <property type="match status" value="2"/>
</dbReference>
<dbReference type="Gene3D" id="3.30.40.10">
    <property type="entry name" value="Zinc/RING finger domain, C3HC4 (zinc finger)"/>
    <property type="match status" value="1"/>
</dbReference>
<dbReference type="InterPro" id="IPR002110">
    <property type="entry name" value="Ankyrin_rpt"/>
</dbReference>
<dbReference type="InterPro" id="IPR036770">
    <property type="entry name" value="Ankyrin_rpt-contain_sf"/>
</dbReference>
<dbReference type="InterPro" id="IPR052391">
    <property type="entry name" value="E3_Ligase-Neurotoxin"/>
</dbReference>
<dbReference type="InterPro" id="IPR056760">
    <property type="entry name" value="RING_XB3-like"/>
</dbReference>
<dbReference type="InterPro" id="IPR001841">
    <property type="entry name" value="Znf_RING"/>
</dbReference>
<dbReference type="InterPro" id="IPR013083">
    <property type="entry name" value="Znf_RING/FYVE/PHD"/>
</dbReference>
<dbReference type="InterPro" id="IPR017907">
    <property type="entry name" value="Znf_RING_CS"/>
</dbReference>
<dbReference type="PANTHER" id="PTHR24133">
    <property type="entry name" value="ANKYRIN DOMAIN-CONTAINING"/>
    <property type="match status" value="1"/>
</dbReference>
<dbReference type="PANTHER" id="PTHR24133:SF40">
    <property type="entry name" value="ANKYRIN REPEAT DOMAIN 44"/>
    <property type="match status" value="1"/>
</dbReference>
<dbReference type="Pfam" id="PF00023">
    <property type="entry name" value="Ank"/>
    <property type="match status" value="1"/>
</dbReference>
<dbReference type="Pfam" id="PF12796">
    <property type="entry name" value="Ank_2"/>
    <property type="match status" value="2"/>
</dbReference>
<dbReference type="Pfam" id="PF24921">
    <property type="entry name" value="RING_XB3-XBAT31"/>
    <property type="match status" value="1"/>
</dbReference>
<dbReference type="SMART" id="SM00248">
    <property type="entry name" value="ANK"/>
    <property type="match status" value="5"/>
</dbReference>
<dbReference type="SUPFAM" id="SSF48403">
    <property type="entry name" value="Ankyrin repeat"/>
    <property type="match status" value="1"/>
</dbReference>
<dbReference type="SUPFAM" id="SSF57850">
    <property type="entry name" value="RING/U-box"/>
    <property type="match status" value="1"/>
</dbReference>
<dbReference type="PROSITE" id="PS50297">
    <property type="entry name" value="ANK_REP_REGION"/>
    <property type="match status" value="1"/>
</dbReference>
<dbReference type="PROSITE" id="PS50088">
    <property type="entry name" value="ANK_REPEAT"/>
    <property type="match status" value="5"/>
</dbReference>
<dbReference type="PROSITE" id="PS00518">
    <property type="entry name" value="ZF_RING_1"/>
    <property type="match status" value="1"/>
</dbReference>
<dbReference type="PROSITE" id="PS50089">
    <property type="entry name" value="ZF_RING_2"/>
    <property type="match status" value="1"/>
</dbReference>
<protein>
    <recommendedName>
        <fullName>Probable E3 ubiquitin-protein ligase XBOS33</fullName>
        <ecNumber>2.3.2.27</ecNumber>
    </recommendedName>
    <alternativeName>
        <fullName>Ankyrin repeat domain and RING finger-containing protein XBOS33</fullName>
    </alternativeName>
    <alternativeName>
        <fullName>RING-type E3 ubiquitin transferase XBOS33</fullName>
    </alternativeName>
    <alternativeName>
        <fullName>XB3 protein homolog 3</fullName>
    </alternativeName>
</protein>
<evidence type="ECO:0000255" key="1">
    <source>
        <dbReference type="PROSITE-ProRule" id="PRU00175"/>
    </source>
</evidence>
<evidence type="ECO:0000256" key="2">
    <source>
        <dbReference type="SAM" id="MobiDB-lite"/>
    </source>
</evidence>
<evidence type="ECO:0000303" key="3">
    <source>
    </source>
</evidence>
<evidence type="ECO:0000305" key="4"/>
<feature type="chain" id="PRO_0000395747" description="Probable E3 ubiquitin-protein ligase XBOS33">
    <location>
        <begin position="1"/>
        <end position="520"/>
    </location>
</feature>
<feature type="repeat" description="ANK 1">
    <location>
        <begin position="44"/>
        <end position="73"/>
    </location>
</feature>
<feature type="repeat" description="ANK 2">
    <location>
        <begin position="77"/>
        <end position="106"/>
    </location>
</feature>
<feature type="repeat" description="ANK 3">
    <location>
        <begin position="111"/>
        <end position="140"/>
    </location>
</feature>
<feature type="repeat" description="ANK 4">
    <location>
        <begin position="185"/>
        <end position="214"/>
    </location>
</feature>
<feature type="repeat" description="ANK 5">
    <location>
        <begin position="228"/>
        <end position="258"/>
    </location>
</feature>
<feature type="zinc finger region" description="RING-type" evidence="1">
    <location>
        <begin position="327"/>
        <end position="377"/>
    </location>
</feature>
<feature type="region of interest" description="Disordered" evidence="2">
    <location>
        <begin position="467"/>
        <end position="493"/>
    </location>
</feature>
<feature type="compositionally biased region" description="Polar residues" evidence="2">
    <location>
        <begin position="467"/>
        <end position="479"/>
    </location>
</feature>
<feature type="compositionally biased region" description="Basic and acidic residues" evidence="2">
    <location>
        <begin position="484"/>
        <end position="493"/>
    </location>
</feature>
<feature type="splice variant" id="VSP_039536" description="In isoform 2." evidence="3">
    <original>EFGLLHTVASVDDSDLCAV</original>
    <variation>LVLNNSLLTNRFSSDGSKV</variation>
    <location>
        <begin position="311"/>
        <end position="329"/>
    </location>
</feature>
<feature type="splice variant" id="VSP_039537" description="In isoform 2." evidence="3">
    <location>
        <begin position="330"/>
        <end position="520"/>
    </location>
</feature>
<keyword id="KW-0025">Alternative splicing</keyword>
<keyword id="KW-0040">ANK repeat</keyword>
<keyword id="KW-0479">Metal-binding</keyword>
<keyword id="KW-1185">Reference proteome</keyword>
<keyword id="KW-0677">Repeat</keyword>
<keyword id="KW-0808">Transferase</keyword>
<keyword id="KW-0833">Ubl conjugation pathway</keyword>
<keyword id="KW-0862">Zinc</keyword>
<keyword id="KW-0863">Zinc-finger</keyword>
<organism>
    <name type="scientific">Oryza sativa subsp. japonica</name>
    <name type="common">Rice</name>
    <dbReference type="NCBI Taxonomy" id="39947"/>
    <lineage>
        <taxon>Eukaryota</taxon>
        <taxon>Viridiplantae</taxon>
        <taxon>Streptophyta</taxon>
        <taxon>Embryophyta</taxon>
        <taxon>Tracheophyta</taxon>
        <taxon>Spermatophyta</taxon>
        <taxon>Magnoliopsida</taxon>
        <taxon>Liliopsida</taxon>
        <taxon>Poales</taxon>
        <taxon>Poaceae</taxon>
        <taxon>BOP clade</taxon>
        <taxon>Oryzoideae</taxon>
        <taxon>Oryzeae</taxon>
        <taxon>Oryzinae</taxon>
        <taxon>Oryza</taxon>
        <taxon>Oryza sativa</taxon>
    </lineage>
</organism>
<reference key="1">
    <citation type="journal article" date="2003" name="Science">
        <title>In-depth view of structure, activity, and evolution of rice chromosome 10.</title>
        <authorList>
            <person name="Yu Y."/>
            <person name="Rambo T."/>
            <person name="Currie J."/>
            <person name="Saski C."/>
            <person name="Kim H.-R."/>
            <person name="Collura K."/>
            <person name="Thompson S."/>
            <person name="Simmons J."/>
            <person name="Yang T.-J."/>
            <person name="Nah G."/>
            <person name="Patel A.J."/>
            <person name="Thurmond S."/>
            <person name="Henry D."/>
            <person name="Oates R."/>
            <person name="Palmer M."/>
            <person name="Pries G."/>
            <person name="Gibson J."/>
            <person name="Anderson H."/>
            <person name="Paradkar M."/>
            <person name="Crane L."/>
            <person name="Dale J."/>
            <person name="Carver M.B."/>
            <person name="Wood T."/>
            <person name="Frisch D."/>
            <person name="Engler F."/>
            <person name="Soderlund C."/>
            <person name="Palmer L.E."/>
            <person name="Teytelman L."/>
            <person name="Nascimento L."/>
            <person name="De la Bastide M."/>
            <person name="Spiegel L."/>
            <person name="Ware D."/>
            <person name="O'Shaughnessy A."/>
            <person name="Dike S."/>
            <person name="Dedhia N."/>
            <person name="Preston R."/>
            <person name="Huang E."/>
            <person name="Ferraro K."/>
            <person name="Kuit K."/>
            <person name="Miller B."/>
            <person name="Zutavern T."/>
            <person name="Katzenberger F."/>
            <person name="Muller S."/>
            <person name="Balija V."/>
            <person name="Martienssen R.A."/>
            <person name="Stein L."/>
            <person name="Minx P."/>
            <person name="Johnson D."/>
            <person name="Cordum H."/>
            <person name="Mardis E."/>
            <person name="Cheng Z."/>
            <person name="Jiang J."/>
            <person name="Wilson R."/>
            <person name="McCombie W.R."/>
            <person name="Wing R.A."/>
            <person name="Yuan Q."/>
            <person name="Ouyang S."/>
            <person name="Liu J."/>
            <person name="Jones K.M."/>
            <person name="Gansberger K."/>
            <person name="Moffat K."/>
            <person name="Hill J."/>
            <person name="Tsitrin T."/>
            <person name="Overton L."/>
            <person name="Bera J."/>
            <person name="Kim M."/>
            <person name="Jin S."/>
            <person name="Tallon L."/>
            <person name="Ciecko A."/>
            <person name="Pai G."/>
            <person name="Van Aken S."/>
            <person name="Utterback T."/>
            <person name="Reidmuller S."/>
            <person name="Bormann J."/>
            <person name="Feldblyum T."/>
            <person name="Hsiao J."/>
            <person name="Zismann V."/>
            <person name="Blunt S."/>
            <person name="de Vazeille A.R."/>
            <person name="Shaffer T."/>
            <person name="Koo H."/>
            <person name="Suh B."/>
            <person name="Yang Q."/>
            <person name="Haas B."/>
            <person name="Peterson J."/>
            <person name="Pertea M."/>
            <person name="Volfovsky N."/>
            <person name="Wortman J."/>
            <person name="White O."/>
            <person name="Salzberg S.L."/>
            <person name="Fraser C.M."/>
            <person name="Buell C.R."/>
            <person name="Messing J."/>
            <person name="Song R."/>
            <person name="Fuks G."/>
            <person name="Llaca V."/>
            <person name="Kovchak S."/>
            <person name="Young S."/>
            <person name="Bowers J.E."/>
            <person name="Paterson A.H."/>
            <person name="Johns M.A."/>
            <person name="Mao L."/>
            <person name="Pan H."/>
            <person name="Dean R.A."/>
        </authorList>
    </citation>
    <scope>NUCLEOTIDE SEQUENCE [LARGE SCALE GENOMIC DNA]</scope>
    <source>
        <strain>cv. Nipponbare</strain>
    </source>
</reference>
<reference key="2">
    <citation type="journal article" date="2005" name="Nature">
        <title>The map-based sequence of the rice genome.</title>
        <authorList>
            <consortium name="International rice genome sequencing project (IRGSP)"/>
        </authorList>
    </citation>
    <scope>NUCLEOTIDE SEQUENCE [LARGE SCALE GENOMIC DNA]</scope>
    <source>
        <strain>cv. Nipponbare</strain>
    </source>
</reference>
<reference key="3">
    <citation type="journal article" date="2008" name="Nucleic Acids Res.">
        <title>The rice annotation project database (RAP-DB): 2008 update.</title>
        <authorList>
            <consortium name="The rice annotation project (RAP)"/>
        </authorList>
    </citation>
    <scope>GENOME REANNOTATION</scope>
    <source>
        <strain>cv. Nipponbare</strain>
    </source>
</reference>
<reference key="4">
    <citation type="journal article" date="2013" name="Rice">
        <title>Improvement of the Oryza sativa Nipponbare reference genome using next generation sequence and optical map data.</title>
        <authorList>
            <person name="Kawahara Y."/>
            <person name="de la Bastide M."/>
            <person name="Hamilton J.P."/>
            <person name="Kanamori H."/>
            <person name="McCombie W.R."/>
            <person name="Ouyang S."/>
            <person name="Schwartz D.C."/>
            <person name="Tanaka T."/>
            <person name="Wu J."/>
            <person name="Zhou S."/>
            <person name="Childs K.L."/>
            <person name="Davidson R.M."/>
            <person name="Lin H."/>
            <person name="Quesada-Ocampo L."/>
            <person name="Vaillancourt B."/>
            <person name="Sakai H."/>
            <person name="Lee S.S."/>
            <person name="Kim J."/>
            <person name="Numa H."/>
            <person name="Itoh T."/>
            <person name="Buell C.R."/>
            <person name="Matsumoto T."/>
        </authorList>
    </citation>
    <scope>GENOME REANNOTATION</scope>
    <source>
        <strain>cv. Nipponbare</strain>
    </source>
</reference>
<reference key="5">
    <citation type="journal article" date="2003" name="Science">
        <title>Collection, mapping, and annotation of over 28,000 cDNA clones from japonica rice.</title>
        <authorList>
            <consortium name="The rice full-length cDNA consortium"/>
        </authorList>
    </citation>
    <scope>NUCLEOTIDE SEQUENCE [LARGE SCALE MRNA] (ISOFORMS 1 AND 2)</scope>
    <source>
        <strain>cv. Nipponbare</strain>
    </source>
</reference>
<accession>Q337A0</accession>
<accession>C7J825</accession>
<accession>Q109E0</accession>
<accession>Q109E1</accession>
<accession>Q8LNI4</accession>
<accession>Q9FWB4</accession>
<comment type="catalytic activity">
    <reaction>
        <text>S-ubiquitinyl-[E2 ubiquitin-conjugating enzyme]-L-cysteine + [acceptor protein]-L-lysine = [E2 ubiquitin-conjugating enzyme]-L-cysteine + N(6)-ubiquitinyl-[acceptor protein]-L-lysine.</text>
        <dbReference type="EC" id="2.3.2.27"/>
    </reaction>
</comment>
<comment type="pathway">
    <text>Protein modification; protein ubiquitination.</text>
</comment>
<comment type="alternative products">
    <event type="alternative splicing"/>
    <isoform>
        <id>Q337A0-1</id>
        <name>1</name>
        <sequence type="displayed"/>
    </isoform>
    <isoform>
        <id>Q337A0-2</id>
        <name>2</name>
        <sequence type="described" ref="VSP_039536 VSP_039537"/>
    </isoform>
</comment>
<comment type="sequence caution" evidence="4">
    <conflict type="erroneous gene model prediction">
        <sequence resource="EMBL-CDS" id="AAG13435"/>
    </conflict>
</comment>
<comment type="sequence caution" evidence="4">
    <conflict type="erroneous gene model prediction">
        <sequence resource="EMBL-CDS" id="AAM92304"/>
    </conflict>
</comment>
<comment type="sequence caution" evidence="4">
    <conflict type="erroneous gene model prediction">
        <sequence resource="EMBL-CDS" id="ABG66196"/>
    </conflict>
</comment>
<comment type="sequence caution" evidence="4">
    <conflict type="erroneous gene model prediction">
        <sequence resource="EMBL-CDS" id="BAH94971"/>
    </conflict>
</comment>
<name>XB33_ORYSJ</name>